<organism>
    <name type="scientific">Schizosaccharomyces pombe (strain 972 / ATCC 24843)</name>
    <name type="common">Fission yeast</name>
    <dbReference type="NCBI Taxonomy" id="284812"/>
    <lineage>
        <taxon>Eukaryota</taxon>
        <taxon>Fungi</taxon>
        <taxon>Dikarya</taxon>
        <taxon>Ascomycota</taxon>
        <taxon>Taphrinomycotina</taxon>
        <taxon>Schizosaccharomycetes</taxon>
        <taxon>Schizosaccharomycetales</taxon>
        <taxon>Schizosaccharomycetaceae</taxon>
        <taxon>Schizosaccharomyces</taxon>
    </lineage>
</organism>
<comment type="function">
    <text>Calcium-binding protein that interacts with newly synthesized monoglucosylated glycoproteins in the endoplasmic reticulum. It may act in assisting protein assembly and/or in the retention within the ER of unassembled protein subunits. It seems to play a major role in the quality control apparatus of the ER by the retention of incorrectly folded proteins.</text>
</comment>
<comment type="subcellular location">
    <subcellularLocation>
        <location>Endoplasmic reticulum membrane</location>
        <topology>Single-pass type I membrane protein</topology>
    </subcellularLocation>
</comment>
<comment type="similarity">
    <text evidence="6">Belongs to the calreticulin family.</text>
</comment>
<name>CALX_SCHPO</name>
<keyword id="KW-0106">Calcium</keyword>
<keyword id="KW-0143">Chaperone</keyword>
<keyword id="KW-1015">Disulfide bond</keyword>
<keyword id="KW-0256">Endoplasmic reticulum</keyword>
<keyword id="KW-0325">Glycoprotein</keyword>
<keyword id="KW-0430">Lectin</keyword>
<keyword id="KW-0472">Membrane</keyword>
<keyword id="KW-0597">Phosphoprotein</keyword>
<keyword id="KW-1185">Reference proteome</keyword>
<keyword id="KW-0677">Repeat</keyword>
<keyword id="KW-0732">Signal</keyword>
<keyword id="KW-0812">Transmembrane</keyword>
<keyword id="KW-1133">Transmembrane helix</keyword>
<dbReference type="EMBL" id="M98799">
    <property type="protein sequence ID" value="AAA79757.1"/>
    <property type="molecule type" value="Genomic_DNA"/>
</dbReference>
<dbReference type="EMBL" id="U13389">
    <property type="protein sequence ID" value="AAA68631.1"/>
    <property type="molecule type" value="Genomic_DNA"/>
</dbReference>
<dbReference type="EMBL" id="CU329670">
    <property type="protein sequence ID" value="CAB16741.1"/>
    <property type="molecule type" value="Genomic_DNA"/>
</dbReference>
<dbReference type="PIR" id="S56142">
    <property type="entry name" value="S56142"/>
</dbReference>
<dbReference type="RefSeq" id="NP_593612.1">
    <property type="nucleotide sequence ID" value="NM_001019043.2"/>
</dbReference>
<dbReference type="SMR" id="P36581"/>
<dbReference type="BioGRID" id="279476">
    <property type="interactions" value="7"/>
</dbReference>
<dbReference type="FunCoup" id="P36581">
    <property type="interactions" value="226"/>
</dbReference>
<dbReference type="STRING" id="284812.P36581"/>
<dbReference type="GlyCosmos" id="P36581">
    <property type="glycosylation" value="1 site, No reported glycans"/>
</dbReference>
<dbReference type="iPTMnet" id="P36581"/>
<dbReference type="PaxDb" id="4896-SPAC3C7.11c.1"/>
<dbReference type="EnsemblFungi" id="SPAC3C7.11c.1">
    <property type="protein sequence ID" value="SPAC3C7.11c.1:pep"/>
    <property type="gene ID" value="SPAC3C7.11c"/>
</dbReference>
<dbReference type="PomBase" id="SPAC3C7.11c"/>
<dbReference type="VEuPathDB" id="FungiDB:SPAC3C7.11c"/>
<dbReference type="eggNOG" id="KOG0675">
    <property type="taxonomic scope" value="Eukaryota"/>
</dbReference>
<dbReference type="HOGENOM" id="CLU_018224_1_2_1"/>
<dbReference type="InParanoid" id="P36581"/>
<dbReference type="OMA" id="LFWLKQY"/>
<dbReference type="PhylomeDB" id="P36581"/>
<dbReference type="Reactome" id="R-SPO-901042">
    <property type="pathway name" value="Calnexin/calreticulin cycle"/>
</dbReference>
<dbReference type="PRO" id="PR:P36581"/>
<dbReference type="Proteomes" id="UP000002485">
    <property type="component" value="Chromosome I"/>
</dbReference>
<dbReference type="GO" id="GO:0005783">
    <property type="term" value="C:endoplasmic reticulum"/>
    <property type="evidence" value="ECO:0000314"/>
    <property type="project" value="PomBase"/>
</dbReference>
<dbReference type="GO" id="GO:0005789">
    <property type="term" value="C:endoplasmic reticulum membrane"/>
    <property type="evidence" value="ECO:0000318"/>
    <property type="project" value="GO_Central"/>
</dbReference>
<dbReference type="GO" id="GO:0000324">
    <property type="term" value="C:fungal-type vacuole"/>
    <property type="evidence" value="ECO:0000314"/>
    <property type="project" value="PomBase"/>
</dbReference>
<dbReference type="GO" id="GO:0016020">
    <property type="term" value="C:membrane"/>
    <property type="evidence" value="ECO:0000314"/>
    <property type="project" value="PomBase"/>
</dbReference>
<dbReference type="GO" id="GO:0005509">
    <property type="term" value="F:calcium ion binding"/>
    <property type="evidence" value="ECO:0000314"/>
    <property type="project" value="PomBase"/>
</dbReference>
<dbReference type="GO" id="GO:0030246">
    <property type="term" value="F:carbohydrate binding"/>
    <property type="evidence" value="ECO:0007669"/>
    <property type="project" value="UniProtKB-KW"/>
</dbReference>
<dbReference type="GO" id="GO:0051082">
    <property type="term" value="F:unfolded protein binding"/>
    <property type="evidence" value="ECO:0007669"/>
    <property type="project" value="InterPro"/>
</dbReference>
<dbReference type="GO" id="GO:0036503">
    <property type="term" value="P:ERAD pathway"/>
    <property type="evidence" value="ECO:0000318"/>
    <property type="project" value="GO_Central"/>
</dbReference>
<dbReference type="GO" id="GO:0006457">
    <property type="term" value="P:protein folding"/>
    <property type="evidence" value="ECO:0000318"/>
    <property type="project" value="GO_Central"/>
</dbReference>
<dbReference type="FunFam" id="2.10.250.10:FF:000001">
    <property type="entry name" value="Calnexin homolog"/>
    <property type="match status" value="1"/>
</dbReference>
<dbReference type="FunFam" id="2.60.120.200:FF:000011">
    <property type="entry name" value="Probable calnexin"/>
    <property type="match status" value="1"/>
</dbReference>
<dbReference type="Gene3D" id="2.60.120.200">
    <property type="match status" value="1"/>
</dbReference>
<dbReference type="Gene3D" id="2.10.250.10">
    <property type="entry name" value="Calreticulin/calnexin, P domain"/>
    <property type="match status" value="1"/>
</dbReference>
<dbReference type="InterPro" id="IPR001580">
    <property type="entry name" value="Calret/calnex"/>
</dbReference>
<dbReference type="InterPro" id="IPR018124">
    <property type="entry name" value="Calret/calnex_CS"/>
</dbReference>
<dbReference type="InterPro" id="IPR009033">
    <property type="entry name" value="Calreticulin/calnexin_P_dom_sf"/>
</dbReference>
<dbReference type="InterPro" id="IPR013320">
    <property type="entry name" value="ConA-like_dom_sf"/>
</dbReference>
<dbReference type="PANTHER" id="PTHR11073:SF1">
    <property type="entry name" value="CALNEXIN 14D-RELATED"/>
    <property type="match status" value="1"/>
</dbReference>
<dbReference type="PANTHER" id="PTHR11073">
    <property type="entry name" value="CALRETICULIN AND CALNEXIN"/>
    <property type="match status" value="1"/>
</dbReference>
<dbReference type="Pfam" id="PF00262">
    <property type="entry name" value="Calreticulin"/>
    <property type="match status" value="1"/>
</dbReference>
<dbReference type="PRINTS" id="PR00626">
    <property type="entry name" value="CALRETICULIN"/>
</dbReference>
<dbReference type="SUPFAM" id="SSF49899">
    <property type="entry name" value="Concanavalin A-like lectins/glucanases"/>
    <property type="match status" value="2"/>
</dbReference>
<dbReference type="SUPFAM" id="SSF63887">
    <property type="entry name" value="P-domain of calnexin/calreticulin"/>
    <property type="match status" value="1"/>
</dbReference>
<dbReference type="PROSITE" id="PS00803">
    <property type="entry name" value="CALRETICULIN_1"/>
    <property type="match status" value="1"/>
</dbReference>
<dbReference type="PROSITE" id="PS00804">
    <property type="entry name" value="CALRETICULIN_2"/>
    <property type="match status" value="1"/>
</dbReference>
<dbReference type="PROSITE" id="PS00805">
    <property type="entry name" value="CALRETICULIN_REPEAT"/>
    <property type="match status" value="2"/>
</dbReference>
<evidence type="ECO:0000250" key="1"/>
<evidence type="ECO:0000250" key="2">
    <source>
        <dbReference type="UniProtKB" id="P14211"/>
    </source>
</evidence>
<evidence type="ECO:0000255" key="3"/>
<evidence type="ECO:0000256" key="4">
    <source>
        <dbReference type="SAM" id="MobiDB-lite"/>
    </source>
</evidence>
<evidence type="ECO:0000269" key="5">
    <source>
    </source>
</evidence>
<evidence type="ECO:0000305" key="6"/>
<gene>
    <name type="primary">cal1</name>
    <name type="synonym">cnx1</name>
    <name type="ORF">SPAC3C7.11c</name>
</gene>
<reference key="1">
    <citation type="journal article" date="1995" name="EMBO J.">
        <title>The calnexin homologue cnx1+ in Schizosaccharomyces pombe, is an essential gene which can be complemented by its soluble ER domain.</title>
        <authorList>
            <person name="Parlati F."/>
            <person name="Dignard D."/>
            <person name="Bergeron J.J.M."/>
            <person name="Thomas D.Y."/>
        </authorList>
    </citation>
    <scope>NUCLEOTIDE SEQUENCE [GENOMIC DNA]</scope>
</reference>
<reference key="2">
    <citation type="journal article" date="1995" name="J. Biol. Chem.">
        <title>The Schizosaccharomyces pombe homologue of the chaperone calnexin is essential for viability.</title>
        <authorList>
            <person name="Jannatipour M."/>
            <person name="Rokeach L.A."/>
        </authorList>
    </citation>
    <scope>NUCLEOTIDE SEQUENCE [GENOMIC DNA]</scope>
</reference>
<reference key="3">
    <citation type="journal article" date="2002" name="Nature">
        <title>The genome sequence of Schizosaccharomyces pombe.</title>
        <authorList>
            <person name="Wood V."/>
            <person name="Gwilliam R."/>
            <person name="Rajandream M.A."/>
            <person name="Lyne M.H."/>
            <person name="Lyne R."/>
            <person name="Stewart A."/>
            <person name="Sgouros J.G."/>
            <person name="Peat N."/>
            <person name="Hayles J."/>
            <person name="Baker S.G."/>
            <person name="Basham D."/>
            <person name="Bowman S."/>
            <person name="Brooks K."/>
            <person name="Brown D."/>
            <person name="Brown S."/>
            <person name="Chillingworth T."/>
            <person name="Churcher C.M."/>
            <person name="Collins M."/>
            <person name="Connor R."/>
            <person name="Cronin A."/>
            <person name="Davis P."/>
            <person name="Feltwell T."/>
            <person name="Fraser A."/>
            <person name="Gentles S."/>
            <person name="Goble A."/>
            <person name="Hamlin N."/>
            <person name="Harris D.E."/>
            <person name="Hidalgo J."/>
            <person name="Hodgson G."/>
            <person name="Holroyd S."/>
            <person name="Hornsby T."/>
            <person name="Howarth S."/>
            <person name="Huckle E.J."/>
            <person name="Hunt S."/>
            <person name="Jagels K."/>
            <person name="James K.D."/>
            <person name="Jones L."/>
            <person name="Jones M."/>
            <person name="Leather S."/>
            <person name="McDonald S."/>
            <person name="McLean J."/>
            <person name="Mooney P."/>
            <person name="Moule S."/>
            <person name="Mungall K.L."/>
            <person name="Murphy L.D."/>
            <person name="Niblett D."/>
            <person name="Odell C."/>
            <person name="Oliver K."/>
            <person name="O'Neil S."/>
            <person name="Pearson D."/>
            <person name="Quail M.A."/>
            <person name="Rabbinowitsch E."/>
            <person name="Rutherford K.M."/>
            <person name="Rutter S."/>
            <person name="Saunders D."/>
            <person name="Seeger K."/>
            <person name="Sharp S."/>
            <person name="Skelton J."/>
            <person name="Simmonds M.N."/>
            <person name="Squares R."/>
            <person name="Squares S."/>
            <person name="Stevens K."/>
            <person name="Taylor K."/>
            <person name="Taylor R.G."/>
            <person name="Tivey A."/>
            <person name="Walsh S.V."/>
            <person name="Warren T."/>
            <person name="Whitehead S."/>
            <person name="Woodward J.R."/>
            <person name="Volckaert G."/>
            <person name="Aert R."/>
            <person name="Robben J."/>
            <person name="Grymonprez B."/>
            <person name="Weltjens I."/>
            <person name="Vanstreels E."/>
            <person name="Rieger M."/>
            <person name="Schaefer M."/>
            <person name="Mueller-Auer S."/>
            <person name="Gabel C."/>
            <person name="Fuchs M."/>
            <person name="Duesterhoeft A."/>
            <person name="Fritzc C."/>
            <person name="Holzer E."/>
            <person name="Moestl D."/>
            <person name="Hilbert H."/>
            <person name="Borzym K."/>
            <person name="Langer I."/>
            <person name="Beck A."/>
            <person name="Lehrach H."/>
            <person name="Reinhardt R."/>
            <person name="Pohl T.M."/>
            <person name="Eger P."/>
            <person name="Zimmermann W."/>
            <person name="Wedler H."/>
            <person name="Wambutt R."/>
            <person name="Purnelle B."/>
            <person name="Goffeau A."/>
            <person name="Cadieu E."/>
            <person name="Dreano S."/>
            <person name="Gloux S."/>
            <person name="Lelaure V."/>
            <person name="Mottier S."/>
            <person name="Galibert F."/>
            <person name="Aves S.J."/>
            <person name="Xiang Z."/>
            <person name="Hunt C."/>
            <person name="Moore K."/>
            <person name="Hurst S.M."/>
            <person name="Lucas M."/>
            <person name="Rochet M."/>
            <person name="Gaillardin C."/>
            <person name="Tallada V.A."/>
            <person name="Garzon A."/>
            <person name="Thode G."/>
            <person name="Daga R.R."/>
            <person name="Cruzado L."/>
            <person name="Jimenez J."/>
            <person name="Sanchez M."/>
            <person name="del Rey F."/>
            <person name="Benito J."/>
            <person name="Dominguez A."/>
            <person name="Revuelta J.L."/>
            <person name="Moreno S."/>
            <person name="Armstrong J."/>
            <person name="Forsburg S.L."/>
            <person name="Cerutti L."/>
            <person name="Lowe T."/>
            <person name="McCombie W.R."/>
            <person name="Paulsen I."/>
            <person name="Potashkin J."/>
            <person name="Shpakovski G.V."/>
            <person name="Ussery D."/>
            <person name="Barrell B.G."/>
            <person name="Nurse P."/>
        </authorList>
    </citation>
    <scope>NUCLEOTIDE SEQUENCE [LARGE SCALE GENOMIC DNA]</scope>
    <source>
        <strain>972 / ATCC 24843</strain>
    </source>
</reference>
<reference key="4">
    <citation type="journal article" date="2008" name="J. Proteome Res.">
        <title>Phosphoproteome analysis of fission yeast.</title>
        <authorList>
            <person name="Wilson-Grady J.T."/>
            <person name="Villen J."/>
            <person name="Gygi S.P."/>
        </authorList>
    </citation>
    <scope>PHOSPHORYLATION [LARGE SCALE ANALYSIS] AT THR-551; SER-553 AND THR-555</scope>
    <scope>IDENTIFICATION BY MASS SPECTROMETRY</scope>
</reference>
<feature type="signal peptide" evidence="3">
    <location>
        <begin position="1"/>
        <end position="22"/>
    </location>
</feature>
<feature type="chain" id="PRO_0000004209" description="Calnexin homolog">
    <location>
        <begin position="23"/>
        <end position="560"/>
    </location>
</feature>
<feature type="topological domain" description="Lumenal" evidence="3">
    <location>
        <begin position="23"/>
        <end position="489"/>
    </location>
</feature>
<feature type="transmembrane region" description="Helical" evidence="3">
    <location>
        <begin position="490"/>
        <end position="512"/>
    </location>
</feature>
<feature type="topological domain" description="Cytoplasmic" evidence="3">
    <location>
        <begin position="513"/>
        <end position="560"/>
    </location>
</feature>
<feature type="repeat" description="1-1">
    <location>
        <begin position="244"/>
        <end position="255"/>
    </location>
</feature>
<feature type="repeat" description="1-2">
    <location>
        <begin position="261"/>
        <end position="272"/>
    </location>
</feature>
<feature type="repeat" description="1-3">
    <location>
        <begin position="280"/>
        <end position="291"/>
    </location>
</feature>
<feature type="repeat" description="1-4">
    <location>
        <begin position="299"/>
        <end position="310"/>
    </location>
</feature>
<feature type="repeat" description="2-1">
    <location>
        <begin position="314"/>
        <end position="324"/>
    </location>
</feature>
<feature type="repeat" description="2-2">
    <location>
        <begin position="333"/>
        <end position="343"/>
    </location>
</feature>
<feature type="repeat" description="2-3">
    <location>
        <begin position="347"/>
        <end position="357"/>
    </location>
</feature>
<feature type="repeat" description="2-4">
    <location>
        <begin position="361"/>
        <end position="371"/>
    </location>
</feature>
<feature type="region of interest" description="P domain (Extended arm)" evidence="1">
    <location>
        <begin position="242"/>
        <end position="375"/>
    </location>
</feature>
<feature type="region of interest" description="4 X approximate repeats">
    <location>
        <begin position="244"/>
        <end position="310"/>
    </location>
</feature>
<feature type="region of interest" description="Disordered" evidence="4">
    <location>
        <begin position="253"/>
        <end position="273"/>
    </location>
</feature>
<feature type="region of interest" description="4 X approximate repeats">
    <location>
        <begin position="314"/>
        <end position="371"/>
    </location>
</feature>
<feature type="region of interest" description="Disordered" evidence="4">
    <location>
        <begin position="517"/>
        <end position="560"/>
    </location>
</feature>
<feature type="compositionally biased region" description="Basic and acidic residues" evidence="4">
    <location>
        <begin position="525"/>
        <end position="544"/>
    </location>
</feature>
<feature type="binding site" evidence="2">
    <location>
        <position position="136"/>
    </location>
    <ligand>
        <name>an alpha-D-glucoside</name>
        <dbReference type="ChEBI" id="CHEBI:22390"/>
    </ligand>
</feature>
<feature type="binding site" evidence="2">
    <location>
        <position position="138"/>
    </location>
    <ligand>
        <name>an alpha-D-glucoside</name>
        <dbReference type="ChEBI" id="CHEBI:22390"/>
    </ligand>
</feature>
<feature type="binding site" evidence="2">
    <location>
        <position position="154"/>
    </location>
    <ligand>
        <name>an alpha-D-glucoside</name>
        <dbReference type="ChEBI" id="CHEBI:22390"/>
    </ligand>
</feature>
<feature type="binding site" evidence="2">
    <location>
        <position position="161"/>
    </location>
    <ligand>
        <name>an alpha-D-glucoside</name>
        <dbReference type="ChEBI" id="CHEBI:22390"/>
    </ligand>
</feature>
<feature type="binding site" evidence="2">
    <location>
        <position position="391"/>
    </location>
    <ligand>
        <name>an alpha-D-glucoside</name>
        <dbReference type="ChEBI" id="CHEBI:22390"/>
    </ligand>
</feature>
<feature type="modified residue" description="Phosphothreonine" evidence="5">
    <location>
        <position position="551"/>
    </location>
</feature>
<feature type="modified residue" description="Phosphoserine" evidence="5">
    <location>
        <position position="553"/>
    </location>
</feature>
<feature type="modified residue" description="Phosphothreonine" evidence="5">
    <location>
        <position position="555"/>
    </location>
</feature>
<feature type="glycosylation site" description="N-linked (GlcNAc...) asparagine" evidence="3">
    <location>
        <position position="418"/>
    </location>
</feature>
<feature type="disulfide bond" evidence="1">
    <location>
        <begin position="132"/>
        <end position="163"/>
    </location>
</feature>
<feature type="disulfide bond" evidence="1">
    <location>
        <begin position="326"/>
        <end position="332"/>
    </location>
</feature>
<proteinExistence type="evidence at protein level"/>
<accession>P36581</accession>
<sequence>MKYGKVSFLALLCSLYVRGSLADPESEQEPLVFNPTEVKAPLVEQFQGAWSERWIPSHAKRFVNGIEEMSYVGEWTVEESSGPGALKGEAGLVMKDEAAHHAISYEFDEPINEPEKDLVVQYEVNPEEGLNCGGAYLKLLAEPTHGEMSNSIDYRIMFGPDKCGVNDRVHFIFKHKNPLTGEYSEKHLDSRPASLLKPGITNLYTLIVKPDQTFEVRINGDVVRQGSLFYDFIPPVLPPVEIYDPEDIKPADWVDEPEIPDPNAVKPDDWDEDAPRMIPDPDAVKPEDWLEDEPLYIPDPEAQKPEDWDDEEDGDWIPSEIINPKCIEGAGCGEWKPPMIRNPNYRGPWSPPMIPNPEFIGEWYPRKIPNPDYFDDDHPSHFGPLYGVGFELWTMQPNIRFSNIYVGHSIEDAERLGNETFLPKLKAERELLSKQESMEKQSMHVDEESNQILEKFLDVYDIIKAKLPPNVAEKVDYYVETIIETPEIGIAIVAVLGSLTAVILTCYFYFFASSSPASLSTGTTEAEKEQQEKFKQETETEKIDVSYAPETESPTAKNED</sequence>
<protein>
    <recommendedName>
        <fullName>Calnexin homolog</fullName>
    </recommendedName>
</protein>